<dbReference type="EC" id="2.6.99.2" evidence="1"/>
<dbReference type="EMBL" id="BA000019">
    <property type="protein sequence ID" value="BAB77742.1"/>
    <property type="molecule type" value="Genomic_DNA"/>
</dbReference>
<dbReference type="PIR" id="AB1834">
    <property type="entry name" value="AB1834"/>
</dbReference>
<dbReference type="RefSeq" id="WP_010994395.1">
    <property type="nucleotide sequence ID" value="NZ_RSCN01000026.1"/>
</dbReference>
<dbReference type="SMR" id="Q8Z080"/>
<dbReference type="STRING" id="103690.gene:10492225"/>
<dbReference type="KEGG" id="ana:all0218"/>
<dbReference type="eggNOG" id="COG0854">
    <property type="taxonomic scope" value="Bacteria"/>
</dbReference>
<dbReference type="OrthoDB" id="9806590at2"/>
<dbReference type="UniPathway" id="UPA00244">
    <property type="reaction ID" value="UER00313"/>
</dbReference>
<dbReference type="Proteomes" id="UP000002483">
    <property type="component" value="Chromosome"/>
</dbReference>
<dbReference type="GO" id="GO:0005829">
    <property type="term" value="C:cytosol"/>
    <property type="evidence" value="ECO:0007669"/>
    <property type="project" value="TreeGrafter"/>
</dbReference>
<dbReference type="GO" id="GO:0033856">
    <property type="term" value="F:pyridoxine 5'-phosphate synthase activity"/>
    <property type="evidence" value="ECO:0007669"/>
    <property type="project" value="UniProtKB-EC"/>
</dbReference>
<dbReference type="GO" id="GO:0008615">
    <property type="term" value="P:pyridoxine biosynthetic process"/>
    <property type="evidence" value="ECO:0007669"/>
    <property type="project" value="UniProtKB-UniRule"/>
</dbReference>
<dbReference type="CDD" id="cd00003">
    <property type="entry name" value="PNPsynthase"/>
    <property type="match status" value="1"/>
</dbReference>
<dbReference type="Gene3D" id="3.20.20.70">
    <property type="entry name" value="Aldolase class I"/>
    <property type="match status" value="1"/>
</dbReference>
<dbReference type="HAMAP" id="MF_00279">
    <property type="entry name" value="PdxJ"/>
    <property type="match status" value="1"/>
</dbReference>
<dbReference type="InterPro" id="IPR013785">
    <property type="entry name" value="Aldolase_TIM"/>
</dbReference>
<dbReference type="InterPro" id="IPR004569">
    <property type="entry name" value="PyrdxlP_synth_PdxJ"/>
</dbReference>
<dbReference type="InterPro" id="IPR036130">
    <property type="entry name" value="Pyridoxine-5'_phos_synth"/>
</dbReference>
<dbReference type="NCBIfam" id="TIGR00559">
    <property type="entry name" value="pdxJ"/>
    <property type="match status" value="1"/>
</dbReference>
<dbReference type="NCBIfam" id="NF003623">
    <property type="entry name" value="PRK05265.1-1"/>
    <property type="match status" value="1"/>
</dbReference>
<dbReference type="NCBIfam" id="NF003625">
    <property type="entry name" value="PRK05265.1-3"/>
    <property type="match status" value="1"/>
</dbReference>
<dbReference type="NCBIfam" id="NF003627">
    <property type="entry name" value="PRK05265.1-5"/>
    <property type="match status" value="1"/>
</dbReference>
<dbReference type="PANTHER" id="PTHR30456">
    <property type="entry name" value="PYRIDOXINE 5'-PHOSPHATE SYNTHASE"/>
    <property type="match status" value="1"/>
</dbReference>
<dbReference type="PANTHER" id="PTHR30456:SF0">
    <property type="entry name" value="PYRIDOXINE 5'-PHOSPHATE SYNTHASE"/>
    <property type="match status" value="1"/>
</dbReference>
<dbReference type="Pfam" id="PF03740">
    <property type="entry name" value="PdxJ"/>
    <property type="match status" value="1"/>
</dbReference>
<dbReference type="SUPFAM" id="SSF63892">
    <property type="entry name" value="Pyridoxine 5'-phosphate synthase"/>
    <property type="match status" value="1"/>
</dbReference>
<gene>
    <name evidence="1" type="primary">pdxJ</name>
    <name type="ordered locus">all0218</name>
</gene>
<name>PDXJ_NOSS1</name>
<proteinExistence type="inferred from homology"/>
<evidence type="ECO:0000255" key="1">
    <source>
        <dbReference type="HAMAP-Rule" id="MF_00279"/>
    </source>
</evidence>
<reference key="1">
    <citation type="journal article" date="2001" name="DNA Res.">
        <title>Complete genomic sequence of the filamentous nitrogen-fixing cyanobacterium Anabaena sp. strain PCC 7120.</title>
        <authorList>
            <person name="Kaneko T."/>
            <person name="Nakamura Y."/>
            <person name="Wolk C.P."/>
            <person name="Kuritz T."/>
            <person name="Sasamoto S."/>
            <person name="Watanabe A."/>
            <person name="Iriguchi M."/>
            <person name="Ishikawa A."/>
            <person name="Kawashima K."/>
            <person name="Kimura T."/>
            <person name="Kishida Y."/>
            <person name="Kohara M."/>
            <person name="Matsumoto M."/>
            <person name="Matsuno A."/>
            <person name="Muraki A."/>
            <person name="Nakazaki N."/>
            <person name="Shimpo S."/>
            <person name="Sugimoto M."/>
            <person name="Takazawa M."/>
            <person name="Yamada M."/>
            <person name="Yasuda M."/>
            <person name="Tabata S."/>
        </authorList>
    </citation>
    <scope>NUCLEOTIDE SEQUENCE [LARGE SCALE GENOMIC DNA]</scope>
    <source>
        <strain>PCC 7120 / SAG 25.82 / UTEX 2576</strain>
    </source>
</reference>
<comment type="function">
    <text evidence="1">Catalyzes the complicated ring closure reaction between the two acyclic compounds 1-deoxy-D-xylulose-5-phosphate (DXP) and 3-amino-2-oxopropyl phosphate (1-amino-acetone-3-phosphate or AAP) to form pyridoxine 5'-phosphate (PNP) and inorganic phosphate.</text>
</comment>
<comment type="catalytic activity">
    <reaction evidence="1">
        <text>3-amino-2-oxopropyl phosphate + 1-deoxy-D-xylulose 5-phosphate = pyridoxine 5'-phosphate + phosphate + 2 H2O + H(+)</text>
        <dbReference type="Rhea" id="RHEA:15265"/>
        <dbReference type="ChEBI" id="CHEBI:15377"/>
        <dbReference type="ChEBI" id="CHEBI:15378"/>
        <dbReference type="ChEBI" id="CHEBI:43474"/>
        <dbReference type="ChEBI" id="CHEBI:57279"/>
        <dbReference type="ChEBI" id="CHEBI:57792"/>
        <dbReference type="ChEBI" id="CHEBI:58589"/>
        <dbReference type="EC" id="2.6.99.2"/>
    </reaction>
</comment>
<comment type="pathway">
    <text evidence="1">Cofactor biosynthesis; pyridoxine 5'-phosphate biosynthesis; pyridoxine 5'-phosphate from D-erythrose 4-phosphate: step 5/5.</text>
</comment>
<comment type="subunit">
    <text evidence="1">Homooctamer; tetramer of dimers.</text>
</comment>
<comment type="subcellular location">
    <subcellularLocation>
        <location evidence="1">Cytoplasm</location>
    </subcellularLocation>
</comment>
<comment type="similarity">
    <text evidence="1">Belongs to the PNP synthase family.</text>
</comment>
<protein>
    <recommendedName>
        <fullName evidence="1">Pyridoxine 5'-phosphate synthase</fullName>
        <shortName evidence="1">PNP synthase</shortName>
        <ecNumber evidence="1">2.6.99.2</ecNumber>
    </recommendedName>
</protein>
<organism>
    <name type="scientific">Nostoc sp. (strain PCC 7120 / SAG 25.82 / UTEX 2576)</name>
    <dbReference type="NCBI Taxonomy" id="103690"/>
    <lineage>
        <taxon>Bacteria</taxon>
        <taxon>Bacillati</taxon>
        <taxon>Cyanobacteriota</taxon>
        <taxon>Cyanophyceae</taxon>
        <taxon>Nostocales</taxon>
        <taxon>Nostocaceae</taxon>
        <taxon>Nostoc</taxon>
    </lineage>
</organism>
<accession>Q8Z080</accession>
<sequence length="239" mass="26046">MATLGVNIDHIATIRQARRTVEPDPVAAAVLAELGGADGITVHLREDRRHIQDRDVQLLRHTVRTHLNLEMAATDEMVGIALDIKPDYVTLVPEKREEVTTEGGLDIVGQIARIGEVVSKLQNAAIPVSLFIDAEPSQIEASVKVQAKFIELHTGRYAEATDETSRQQELAFLAAGCEQAIKAGLRVNAGHGLTYWNVYPVAALPGMEELNIGHTIISRAALVGIERAVREMKQAIRGE</sequence>
<feature type="chain" id="PRO_0000190105" description="Pyridoxine 5'-phosphate synthase">
    <location>
        <begin position="1"/>
        <end position="239"/>
    </location>
</feature>
<feature type="active site" description="Proton acceptor" evidence="1">
    <location>
        <position position="43"/>
    </location>
</feature>
<feature type="active site" description="Proton acceptor" evidence="1">
    <location>
        <position position="70"/>
    </location>
</feature>
<feature type="active site" description="Proton donor" evidence="1">
    <location>
        <position position="191"/>
    </location>
</feature>
<feature type="binding site" evidence="1">
    <location>
        <position position="7"/>
    </location>
    <ligand>
        <name>3-amino-2-oxopropyl phosphate</name>
        <dbReference type="ChEBI" id="CHEBI:57279"/>
    </ligand>
</feature>
<feature type="binding site" evidence="1">
    <location>
        <begin position="9"/>
        <end position="10"/>
    </location>
    <ligand>
        <name>1-deoxy-D-xylulose 5-phosphate</name>
        <dbReference type="ChEBI" id="CHEBI:57792"/>
    </ligand>
</feature>
<feature type="binding site" evidence="1">
    <location>
        <position position="18"/>
    </location>
    <ligand>
        <name>3-amino-2-oxopropyl phosphate</name>
        <dbReference type="ChEBI" id="CHEBI:57279"/>
    </ligand>
</feature>
<feature type="binding site" evidence="1">
    <location>
        <position position="45"/>
    </location>
    <ligand>
        <name>1-deoxy-D-xylulose 5-phosphate</name>
        <dbReference type="ChEBI" id="CHEBI:57792"/>
    </ligand>
</feature>
<feature type="binding site" evidence="1">
    <location>
        <position position="50"/>
    </location>
    <ligand>
        <name>1-deoxy-D-xylulose 5-phosphate</name>
        <dbReference type="ChEBI" id="CHEBI:57792"/>
    </ligand>
</feature>
<feature type="binding site" evidence="1">
    <location>
        <position position="100"/>
    </location>
    <ligand>
        <name>1-deoxy-D-xylulose 5-phosphate</name>
        <dbReference type="ChEBI" id="CHEBI:57792"/>
    </ligand>
</feature>
<feature type="binding site" evidence="1">
    <location>
        <position position="192"/>
    </location>
    <ligand>
        <name>3-amino-2-oxopropyl phosphate</name>
        <dbReference type="ChEBI" id="CHEBI:57279"/>
    </ligand>
</feature>
<feature type="binding site" evidence="1">
    <location>
        <begin position="213"/>
        <end position="214"/>
    </location>
    <ligand>
        <name>3-amino-2-oxopropyl phosphate</name>
        <dbReference type="ChEBI" id="CHEBI:57279"/>
    </ligand>
</feature>
<feature type="site" description="Transition state stabilizer" evidence="1">
    <location>
        <position position="151"/>
    </location>
</feature>
<keyword id="KW-0963">Cytoplasm</keyword>
<keyword id="KW-0664">Pyridoxine biosynthesis</keyword>
<keyword id="KW-1185">Reference proteome</keyword>
<keyword id="KW-0808">Transferase</keyword>